<protein>
    <recommendedName>
        <fullName>LIM domain only protein 3</fullName>
        <shortName>LMO-3</shortName>
    </recommendedName>
</protein>
<dbReference type="EMBL" id="CR858323">
    <property type="protein sequence ID" value="CAH90559.1"/>
    <property type="molecule type" value="mRNA"/>
</dbReference>
<dbReference type="EMBL" id="CR858516">
    <property type="protein sequence ID" value="CAH90743.1"/>
    <property type="molecule type" value="mRNA"/>
</dbReference>
<dbReference type="EMBL" id="CR859600">
    <property type="protein sequence ID" value="CAH91763.1"/>
    <property type="molecule type" value="mRNA"/>
</dbReference>
<dbReference type="EMBL" id="CR860023">
    <property type="protein sequence ID" value="CAH92174.1"/>
    <property type="molecule type" value="mRNA"/>
</dbReference>
<dbReference type="EMBL" id="CR861281">
    <property type="protein sequence ID" value="CAH93349.1"/>
    <property type="molecule type" value="mRNA"/>
</dbReference>
<dbReference type="EMBL" id="CR861346">
    <property type="protein sequence ID" value="CAH93407.1"/>
    <property type="molecule type" value="mRNA"/>
</dbReference>
<dbReference type="RefSeq" id="NP_001125415.1">
    <property type="nucleotide sequence ID" value="NM_001131943.1"/>
</dbReference>
<dbReference type="RefSeq" id="NP_001127650.2">
    <property type="nucleotide sequence ID" value="NM_001134178.2"/>
</dbReference>
<dbReference type="RefSeq" id="XP_009245794.1">
    <property type="nucleotide sequence ID" value="XM_009247519.1"/>
</dbReference>
<dbReference type="RefSeq" id="XP_009245795.1">
    <property type="nucleotide sequence ID" value="XM_009247520.4"/>
</dbReference>
<dbReference type="RefSeq" id="XP_054382553.1">
    <property type="nucleotide sequence ID" value="XM_054526578.2"/>
</dbReference>
<dbReference type="RefSeq" id="XP_054382554.1">
    <property type="nucleotide sequence ID" value="XM_054526579.2"/>
</dbReference>
<dbReference type="SMR" id="Q5RBW7"/>
<dbReference type="FunCoup" id="Q5RBW7">
    <property type="interactions" value="1514"/>
</dbReference>
<dbReference type="STRING" id="9601.ENSPPYP00000004954"/>
<dbReference type="Ensembl" id="ENSPPYT00000005148.2">
    <property type="protein sequence ID" value="ENSPPYP00000004954.1"/>
    <property type="gene ID" value="ENSPPYG00000004338.3"/>
</dbReference>
<dbReference type="GeneID" id="100174731"/>
<dbReference type="KEGG" id="pon:100174731"/>
<dbReference type="CTD" id="55885"/>
<dbReference type="eggNOG" id="KOG0490">
    <property type="taxonomic scope" value="Eukaryota"/>
</dbReference>
<dbReference type="GeneTree" id="ENSGT00940000153908"/>
<dbReference type="HOGENOM" id="CLU_001357_7_1_1"/>
<dbReference type="InParanoid" id="Q5RBW7"/>
<dbReference type="OMA" id="DKMTMDG"/>
<dbReference type="OrthoDB" id="6352355at2759"/>
<dbReference type="TreeFam" id="TF351071"/>
<dbReference type="Proteomes" id="UP000001595">
    <property type="component" value="Chromosome 12"/>
</dbReference>
<dbReference type="GO" id="GO:0005634">
    <property type="term" value="C:nucleus"/>
    <property type="evidence" value="ECO:0007669"/>
    <property type="project" value="TreeGrafter"/>
</dbReference>
<dbReference type="GO" id="GO:0140297">
    <property type="term" value="F:DNA-binding transcription factor binding"/>
    <property type="evidence" value="ECO:0007669"/>
    <property type="project" value="TreeGrafter"/>
</dbReference>
<dbReference type="GO" id="GO:0046872">
    <property type="term" value="F:metal ion binding"/>
    <property type="evidence" value="ECO:0007669"/>
    <property type="project" value="UniProtKB-KW"/>
</dbReference>
<dbReference type="GO" id="GO:0003713">
    <property type="term" value="F:transcription coactivator activity"/>
    <property type="evidence" value="ECO:0007669"/>
    <property type="project" value="TreeGrafter"/>
</dbReference>
<dbReference type="GO" id="GO:0045944">
    <property type="term" value="P:positive regulation of transcription by RNA polymerase II"/>
    <property type="evidence" value="ECO:0007669"/>
    <property type="project" value="TreeGrafter"/>
</dbReference>
<dbReference type="CDD" id="cd09388">
    <property type="entry name" value="LIM1_LMO1_LMO3"/>
    <property type="match status" value="1"/>
</dbReference>
<dbReference type="CDD" id="cd09389">
    <property type="entry name" value="LIM2_LMO1_LMO3"/>
    <property type="match status" value="1"/>
</dbReference>
<dbReference type="FunFam" id="2.10.110.10:FF:000015">
    <property type="entry name" value="LIM domain only 3"/>
    <property type="match status" value="1"/>
</dbReference>
<dbReference type="FunFam" id="2.10.110.10:FF:000016">
    <property type="entry name" value="LIM domain only 3"/>
    <property type="match status" value="1"/>
</dbReference>
<dbReference type="Gene3D" id="2.10.110.10">
    <property type="entry name" value="Cysteine Rich Protein"/>
    <property type="match status" value="2"/>
</dbReference>
<dbReference type="InterPro" id="IPR050945">
    <property type="entry name" value="LMO_RBTN_TF"/>
</dbReference>
<dbReference type="InterPro" id="IPR001781">
    <property type="entry name" value="Znf_LIM"/>
</dbReference>
<dbReference type="PANTHER" id="PTHR45787">
    <property type="entry name" value="LD11652P"/>
    <property type="match status" value="1"/>
</dbReference>
<dbReference type="PANTHER" id="PTHR45787:SF7">
    <property type="entry name" value="LIM DOMAIN ONLY PROTEIN 3"/>
    <property type="match status" value="1"/>
</dbReference>
<dbReference type="Pfam" id="PF00412">
    <property type="entry name" value="LIM"/>
    <property type="match status" value="2"/>
</dbReference>
<dbReference type="SMART" id="SM00132">
    <property type="entry name" value="LIM"/>
    <property type="match status" value="2"/>
</dbReference>
<dbReference type="SUPFAM" id="SSF57716">
    <property type="entry name" value="Glucocorticoid receptor-like (DNA-binding domain)"/>
    <property type="match status" value="3"/>
</dbReference>
<dbReference type="PROSITE" id="PS00478">
    <property type="entry name" value="LIM_DOMAIN_1"/>
    <property type="match status" value="2"/>
</dbReference>
<dbReference type="PROSITE" id="PS50023">
    <property type="entry name" value="LIM_DOMAIN_2"/>
    <property type="match status" value="2"/>
</dbReference>
<accession>Q5RBW7</accession>
<keyword id="KW-0440">LIM domain</keyword>
<keyword id="KW-0479">Metal-binding</keyword>
<keyword id="KW-1185">Reference proteome</keyword>
<keyword id="KW-0677">Repeat</keyword>
<keyword id="KW-0804">Transcription</keyword>
<keyword id="KW-0805">Transcription regulation</keyword>
<keyword id="KW-0862">Zinc</keyword>
<name>LMO3_PONAB</name>
<proteinExistence type="evidence at transcript level"/>
<gene>
    <name type="primary">LMO3</name>
</gene>
<sequence length="145" mass="16594">MLSVQPDTKPKGCAGCNRKIKDRYLLKALDKYWHEDCLKCACCDCRLGEVGSTLYTKANLILCRRDYLRLFGVTGNCAACSKLIPAFEMVMRAKDNVYHLDCFACQLCNQRFCVGDKFFLKNNMILCQTDYEEGLMKEGYAPQVR</sequence>
<feature type="chain" id="PRO_0000229761" description="LIM domain only protein 3">
    <location>
        <begin position="1"/>
        <end position="145"/>
    </location>
</feature>
<feature type="domain" description="LIM zinc-binding 1" evidence="1">
    <location>
        <begin position="11"/>
        <end position="73"/>
    </location>
</feature>
<feature type="domain" description="LIM zinc-binding 2" evidence="1">
    <location>
        <begin position="75"/>
        <end position="137"/>
    </location>
</feature>
<evidence type="ECO:0000255" key="1">
    <source>
        <dbReference type="PROSITE-ProRule" id="PRU00125"/>
    </source>
</evidence>
<organism>
    <name type="scientific">Pongo abelii</name>
    <name type="common">Sumatran orangutan</name>
    <name type="synonym">Pongo pygmaeus abelii</name>
    <dbReference type="NCBI Taxonomy" id="9601"/>
    <lineage>
        <taxon>Eukaryota</taxon>
        <taxon>Metazoa</taxon>
        <taxon>Chordata</taxon>
        <taxon>Craniata</taxon>
        <taxon>Vertebrata</taxon>
        <taxon>Euteleostomi</taxon>
        <taxon>Mammalia</taxon>
        <taxon>Eutheria</taxon>
        <taxon>Euarchontoglires</taxon>
        <taxon>Primates</taxon>
        <taxon>Haplorrhini</taxon>
        <taxon>Catarrhini</taxon>
        <taxon>Hominidae</taxon>
        <taxon>Pongo</taxon>
    </lineage>
</organism>
<reference key="1">
    <citation type="submission" date="2004-11" db="EMBL/GenBank/DDBJ databases">
        <authorList>
            <consortium name="The German cDNA consortium"/>
        </authorList>
    </citation>
    <scope>NUCLEOTIDE SEQUENCE [LARGE SCALE MRNA]</scope>
    <source>
        <tissue>Brain cortex</tissue>
    </source>
</reference>